<feature type="chain" id="PRO_0000446118" description="CRISPR system Cms endoribonuclease Csm3">
    <location>
        <begin position="1"/>
        <end position="214"/>
    </location>
</feature>
<feature type="mutagenesis site" description="No degradation of target ssRNA by the Csm complex, complex assembles normally and synthesizes cA6 normally." evidence="1">
    <original>D</original>
    <variation>A</variation>
    <location>
        <position position="32"/>
    </location>
</feature>
<proteinExistence type="evidence at protein level"/>
<organism>
    <name type="scientific">Enterococcus italicus (strain DSM 15952 / CCUG 50447 / LMG 22039 / TP 1.5)</name>
    <dbReference type="NCBI Taxonomy" id="888064"/>
    <lineage>
        <taxon>Bacteria</taxon>
        <taxon>Bacillati</taxon>
        <taxon>Bacillota</taxon>
        <taxon>Bacilli</taxon>
        <taxon>Lactobacillales</taxon>
        <taxon>Enterococcaceae</taxon>
        <taxon>Enterococcus</taxon>
    </lineage>
</organism>
<keyword id="KW-0002">3D-structure</keyword>
<keyword id="KW-0051">Antiviral defense</keyword>
<keyword id="KW-0255">Endonuclease</keyword>
<keyword id="KW-0378">Hydrolase</keyword>
<keyword id="KW-0540">Nuclease</keyword>
<keyword id="KW-1185">Reference proteome</keyword>
<keyword id="KW-0694">RNA-binding</keyword>
<evidence type="ECO:0000269" key="1">
    <source>
    </source>
</evidence>
<evidence type="ECO:0000305" key="2"/>
<protein>
    <recommendedName>
        <fullName>CRISPR system Cms endoribonuclease Csm3</fullName>
        <ecNumber evidence="1">3.1.-.-</ecNumber>
    </recommendedName>
    <alternativeName>
        <fullName>CRISPR type III A-associated RAMP protein Csm3</fullName>
    </alternativeName>
</protein>
<comment type="function">
    <text evidence="1">CRISPR (clustered regularly interspaced short palindromic repeat) is an adaptive immune system that provides protection against mobile genetic elements (viruses, transposable elements and conjugative plasmids). CRISPR clusters contain spacers, sequences complementary to antecedent mobile elements, and target invading nucleic acids. CRISPR clusters are transcribed and processed into CRISPR RNA (crRNA). The type III-A Csm effector complex binds crRNA and acts as a crRNA-guided RNase, DNase and cyclic oligoadenylate synthase; binding of target RNA cognate to the crRNA is required for all activities. In a heterologous host the appropriately targeted Csm effector complex prevents growth of dsDNA phage phiNM1-gamma6.</text>
</comment>
<comment type="function">
    <text evidence="1">This subunit has the target ssRNA endonuclease activity; it cleaves multiple sites in the target RNA at 6 nucleotide intervals.</text>
</comment>
<comment type="subunit">
    <text evidence="1">Part of the Csm effector complex that includes Cas10, Csm2, Csm3, Csm4 and Csm5.</text>
</comment>
<comment type="miscellaneous">
    <text evidence="1">Encoded in a type III-A CRISPR locus.</text>
</comment>
<comment type="similarity">
    <text evidence="2">Belongs to the CRISPR-associated Csm3 family.</text>
</comment>
<gene>
    <name type="primary">csm3</name>
    <name type="ORF">HMPREF9088_1945</name>
</gene>
<reference key="1">
    <citation type="submission" date="2010-12" db="EMBL/GenBank/DDBJ databases">
        <authorList>
            <person name="Muzny D."/>
            <person name="Qin X."/>
            <person name="Deng J."/>
            <person name="Jiang H."/>
            <person name="Liu Y."/>
            <person name="Qu J."/>
            <person name="Song X.-Z."/>
            <person name="Zhang L."/>
            <person name="Thornton R."/>
            <person name="Coyle M."/>
            <person name="Francisco L."/>
            <person name="Jackson L."/>
            <person name="Javaid M."/>
            <person name="Korchina V."/>
            <person name="Kovar C."/>
            <person name="Mata R."/>
            <person name="Mathew T."/>
            <person name="Ngo R."/>
            <person name="Nguyen L."/>
            <person name="Nguyen N."/>
            <person name="Okwuonu G."/>
            <person name="Ongeri F."/>
            <person name="Pham C."/>
            <person name="Simmons D."/>
            <person name="Wilczek-Boney K."/>
            <person name="Hale W."/>
            <person name="Jakkamsetti A."/>
            <person name="Pham P."/>
            <person name="Ruth R."/>
            <person name="San Lucas F."/>
            <person name="Warren J."/>
            <person name="Zhang J."/>
            <person name="Zhao Z."/>
            <person name="Zhou C."/>
            <person name="Zhu D."/>
            <person name="Lee S."/>
            <person name="Bess C."/>
            <person name="Blankenburg K."/>
            <person name="Forbes L."/>
            <person name="Fu Q."/>
            <person name="Gubbala S."/>
            <person name="Hirani K."/>
            <person name="Jayaseelan J.C."/>
            <person name="Lara F."/>
            <person name="Munidasa M."/>
            <person name="Palculict T."/>
            <person name="Patil S."/>
            <person name="Pu L.-L."/>
            <person name="Saada N."/>
            <person name="Tang L."/>
            <person name="Weissenberger G."/>
            <person name="Zhu Y."/>
            <person name="Hemphill L."/>
            <person name="Shang Y."/>
            <person name="Youmans B."/>
            <person name="Ayvaz T."/>
            <person name="Ross M."/>
            <person name="Santibanez J."/>
            <person name="Aqrawi P."/>
            <person name="Gross S."/>
            <person name="Joshi V."/>
            <person name="Fowler G."/>
            <person name="Nazareth L."/>
            <person name="Reid J."/>
            <person name="Worley K."/>
            <person name="Petrosino J."/>
            <person name="Highlander S."/>
            <person name="Gibbs R."/>
        </authorList>
    </citation>
    <scope>NUCLEOTIDE SEQUENCE [LARGE SCALE GENOMIC DNA]</scope>
    <source>
        <strain>DSM 15952 / CCUG 50447 / LMG 22039 / TP 1.5</strain>
    </source>
</reference>
<reference key="2">
    <citation type="journal article" date="2017" name="Nature">
        <title>Type III CRISPR-Cas systems produce cyclic oligoadenylate second messengers.</title>
        <authorList>
            <person name="Niewoehner O."/>
            <person name="Garcia-Doval C."/>
            <person name="Rostoel J.T."/>
            <person name="Berk C."/>
            <person name="Schwede F."/>
            <person name="Bigler L."/>
            <person name="Hall J."/>
            <person name="Marraffini L.A."/>
            <person name="Jinek M."/>
        </authorList>
    </citation>
    <scope>FUNCTION IN PHAGE RESISTANCE</scope>
    <scope>SUBUNIT</scope>
    <scope>MUTAGENESIS OF ASP-32</scope>
    <source>
        <strain>DSM 15952 / CCUG 50447 / LMG 22039 / TP 1.5</strain>
    </source>
</reference>
<name>CSM3_ENTI1</name>
<accession>E6LHV5</accession>
<dbReference type="EC" id="3.1.-.-" evidence="1"/>
<dbReference type="EMBL" id="AEPV01000074">
    <property type="protein sequence ID" value="EFU73215.1"/>
    <property type="molecule type" value="Genomic_DNA"/>
</dbReference>
<dbReference type="RefSeq" id="WP_007208956.1">
    <property type="nucleotide sequence ID" value="NZ_JXKT01000007.1"/>
</dbReference>
<dbReference type="PDB" id="9G9A">
    <property type="method" value="EM"/>
    <property type="resolution" value="2.83 A"/>
    <property type="chains" value="D/E/F=1-214"/>
</dbReference>
<dbReference type="PDB" id="9G9B">
    <property type="method" value="EM"/>
    <property type="resolution" value="3.07 A"/>
    <property type="chains" value="D/E/F/I=1-214"/>
</dbReference>
<dbReference type="PDB" id="9G9C">
    <property type="method" value="EM"/>
    <property type="resolution" value="2.72 A"/>
    <property type="chains" value="D/E/F=1-214"/>
</dbReference>
<dbReference type="PDB" id="9G9D">
    <property type="method" value="EM"/>
    <property type="resolution" value="2.90 A"/>
    <property type="chains" value="D/E/F/I=1-214"/>
</dbReference>
<dbReference type="PDB" id="9G9E">
    <property type="method" value="EM"/>
    <property type="resolution" value="2.87 A"/>
    <property type="chains" value="D/E/F=1-214"/>
</dbReference>
<dbReference type="PDB" id="9G9F">
    <property type="method" value="EM"/>
    <property type="resolution" value="2.93 A"/>
    <property type="chains" value="D/E/F=1-214"/>
</dbReference>
<dbReference type="PDB" id="9G9G">
    <property type="method" value="EM"/>
    <property type="resolution" value="3.38 A"/>
    <property type="chains" value="D/E/F/I=1-214"/>
</dbReference>
<dbReference type="PDB" id="9G9H">
    <property type="method" value="EM"/>
    <property type="resolution" value="2.99 A"/>
    <property type="chains" value="D/E/F=1-214"/>
</dbReference>
<dbReference type="PDB" id="9G9I">
    <property type="method" value="EM"/>
    <property type="resolution" value="3.31 A"/>
    <property type="chains" value="D/E/F=1-214"/>
</dbReference>
<dbReference type="PDB" id="9G9J">
    <property type="method" value="EM"/>
    <property type="resolution" value="3.05 A"/>
    <property type="chains" value="D/E/F=1-214"/>
</dbReference>
<dbReference type="PDB" id="9G9K">
    <property type="method" value="EM"/>
    <property type="resolution" value="3.34 A"/>
    <property type="chains" value="D/E/F/I=1-214"/>
</dbReference>
<dbReference type="PDBsum" id="9G9A"/>
<dbReference type="PDBsum" id="9G9B"/>
<dbReference type="PDBsum" id="9G9C"/>
<dbReference type="PDBsum" id="9G9D"/>
<dbReference type="PDBsum" id="9G9E"/>
<dbReference type="PDBsum" id="9G9F"/>
<dbReference type="PDBsum" id="9G9G"/>
<dbReference type="PDBsum" id="9G9H"/>
<dbReference type="PDBsum" id="9G9I"/>
<dbReference type="PDBsum" id="9G9J"/>
<dbReference type="PDBsum" id="9G9K"/>
<dbReference type="EMDB" id="EMD-51145"/>
<dbReference type="EMDB" id="EMD-51146"/>
<dbReference type="EMDB" id="EMD-51147"/>
<dbReference type="EMDB" id="EMD-51148"/>
<dbReference type="EMDB" id="EMD-51149"/>
<dbReference type="EMDB" id="EMD-51150"/>
<dbReference type="EMDB" id="EMD-51151"/>
<dbReference type="EMDB" id="EMD-51152"/>
<dbReference type="EMDB" id="EMD-51153"/>
<dbReference type="EMDB" id="EMD-51154"/>
<dbReference type="EMDB" id="EMD-51155"/>
<dbReference type="SMR" id="E6LHV5"/>
<dbReference type="STRING" id="888064.HMPREF9088_1945"/>
<dbReference type="PATRIC" id="fig|888064.11.peg.2083"/>
<dbReference type="eggNOG" id="COG1337">
    <property type="taxonomic scope" value="Bacteria"/>
</dbReference>
<dbReference type="HOGENOM" id="CLU_067743_0_0_9"/>
<dbReference type="OrthoDB" id="9789361at2"/>
<dbReference type="Proteomes" id="UP000010296">
    <property type="component" value="Unassembled WGS sequence"/>
</dbReference>
<dbReference type="GO" id="GO:0004519">
    <property type="term" value="F:endonuclease activity"/>
    <property type="evidence" value="ECO:0007669"/>
    <property type="project" value="UniProtKB-KW"/>
</dbReference>
<dbReference type="GO" id="GO:0003723">
    <property type="term" value="F:RNA binding"/>
    <property type="evidence" value="ECO:0007669"/>
    <property type="project" value="UniProtKB-KW"/>
</dbReference>
<dbReference type="GO" id="GO:0051607">
    <property type="term" value="P:defense response to virus"/>
    <property type="evidence" value="ECO:0007669"/>
    <property type="project" value="UniProtKB-KW"/>
</dbReference>
<dbReference type="InterPro" id="IPR013412">
    <property type="entry name" value="CRISPR-assoc_RAMP_Csm3"/>
</dbReference>
<dbReference type="InterPro" id="IPR052216">
    <property type="entry name" value="CRISPR_Csm3_endoribonuclease"/>
</dbReference>
<dbReference type="InterPro" id="IPR005537">
    <property type="entry name" value="RAMP_III_fam"/>
</dbReference>
<dbReference type="NCBIfam" id="TIGR02582">
    <property type="entry name" value="cas7_TM1809"/>
    <property type="match status" value="1"/>
</dbReference>
<dbReference type="PANTHER" id="PTHR35579">
    <property type="entry name" value="CRISPR SYSTEM CMS ENDORIBONUCLEASE CSM3"/>
    <property type="match status" value="1"/>
</dbReference>
<dbReference type="PANTHER" id="PTHR35579:SF3">
    <property type="entry name" value="CRISPR SYSTEM CMS ENDORIBONUCLEASE CSM3"/>
    <property type="match status" value="1"/>
</dbReference>
<dbReference type="Pfam" id="PF03787">
    <property type="entry name" value="RAMPs"/>
    <property type="match status" value="1"/>
</dbReference>
<sequence length="214" mass="23514">MYSKIRIVGKIDVLTGLHIGGGGETSMIGAIDSPVVRDPYSRLPIIPGSSIKGKMRSLLAKHIGLIPGQKMHNQDAPEILRLFGSSQKGAIQSSRLQISDAFFSKASQEEFDKKDLAYTETKFENTISRLTAVANPRQIERVTRGASFDFHIIYNVENINEVMADFENIKTAIHLLENDYLGGGGTRGNGRIRFVIDSIDTVVGDFDSSNLSIK</sequence>